<name>CLPS_BURMS</name>
<reference key="1">
    <citation type="journal article" date="2010" name="Genome Biol. Evol.">
        <title>Continuing evolution of Burkholderia mallei through genome reduction and large-scale rearrangements.</title>
        <authorList>
            <person name="Losada L."/>
            <person name="Ronning C.M."/>
            <person name="DeShazer D."/>
            <person name="Woods D."/>
            <person name="Fedorova N."/>
            <person name="Kim H.S."/>
            <person name="Shabalina S.A."/>
            <person name="Pearson T.R."/>
            <person name="Brinkac L."/>
            <person name="Tan P."/>
            <person name="Nandi T."/>
            <person name="Crabtree J."/>
            <person name="Badger J."/>
            <person name="Beckstrom-Sternberg S."/>
            <person name="Saqib M."/>
            <person name="Schutzer S.E."/>
            <person name="Keim P."/>
            <person name="Nierman W.C."/>
        </authorList>
    </citation>
    <scope>NUCLEOTIDE SEQUENCE [LARGE SCALE GENOMIC DNA]</scope>
    <source>
        <strain>SAVP1</strain>
    </source>
</reference>
<comment type="function">
    <text evidence="1">Involved in the modulation of the specificity of the ClpAP-mediated ATP-dependent protein degradation.</text>
</comment>
<comment type="subunit">
    <text evidence="1">Binds to the N-terminal domain of the chaperone ClpA.</text>
</comment>
<comment type="similarity">
    <text evidence="1">Belongs to the ClpS family.</text>
</comment>
<feature type="chain" id="PRO_1000022597" description="ATP-dependent Clp protease adapter protein ClpS">
    <location>
        <begin position="1"/>
        <end position="104"/>
    </location>
</feature>
<evidence type="ECO:0000255" key="1">
    <source>
        <dbReference type="HAMAP-Rule" id="MF_00302"/>
    </source>
</evidence>
<organism>
    <name type="scientific">Burkholderia mallei (strain SAVP1)</name>
    <dbReference type="NCBI Taxonomy" id="320388"/>
    <lineage>
        <taxon>Bacteria</taxon>
        <taxon>Pseudomonadati</taxon>
        <taxon>Pseudomonadota</taxon>
        <taxon>Betaproteobacteria</taxon>
        <taxon>Burkholderiales</taxon>
        <taxon>Burkholderiaceae</taxon>
        <taxon>Burkholderia</taxon>
        <taxon>pseudomallei group</taxon>
    </lineage>
</organism>
<gene>
    <name evidence="1" type="primary">clpS</name>
    <name type="ordered locus">BMASAVP1_A0575</name>
</gene>
<protein>
    <recommendedName>
        <fullName evidence="1">ATP-dependent Clp protease adapter protein ClpS</fullName>
    </recommendedName>
</protein>
<sequence>MAIIPDKQDSSVLERKEQKLKPPSMYKVVLLNDDFTPMEFVVMVVQEYFKKDRETATQIMLKVHREGRGVCGVYTRDIASTKVEQVVTHARQAGHPLQCVMEEA</sequence>
<proteinExistence type="inferred from homology"/>
<dbReference type="EMBL" id="CP000526">
    <property type="protein sequence ID" value="ABM51571.1"/>
    <property type="molecule type" value="Genomic_DNA"/>
</dbReference>
<dbReference type="RefSeq" id="WP_004194131.1">
    <property type="nucleotide sequence ID" value="NC_008785.1"/>
</dbReference>
<dbReference type="SMR" id="A1V120"/>
<dbReference type="GeneID" id="93059411"/>
<dbReference type="KEGG" id="bmv:BMASAVP1_A0575"/>
<dbReference type="HOGENOM" id="CLU_134358_0_0_4"/>
<dbReference type="GO" id="GO:0030163">
    <property type="term" value="P:protein catabolic process"/>
    <property type="evidence" value="ECO:0007669"/>
    <property type="project" value="InterPro"/>
</dbReference>
<dbReference type="GO" id="GO:0006508">
    <property type="term" value="P:proteolysis"/>
    <property type="evidence" value="ECO:0007669"/>
    <property type="project" value="UniProtKB-UniRule"/>
</dbReference>
<dbReference type="FunFam" id="3.30.1390.10:FF:000002">
    <property type="entry name" value="ATP-dependent Clp protease adapter protein ClpS"/>
    <property type="match status" value="1"/>
</dbReference>
<dbReference type="Gene3D" id="3.30.1390.10">
    <property type="match status" value="1"/>
</dbReference>
<dbReference type="HAMAP" id="MF_00302">
    <property type="entry name" value="ClpS"/>
    <property type="match status" value="1"/>
</dbReference>
<dbReference type="InterPro" id="IPR022935">
    <property type="entry name" value="ClpS"/>
</dbReference>
<dbReference type="InterPro" id="IPR003769">
    <property type="entry name" value="ClpS_core"/>
</dbReference>
<dbReference type="InterPro" id="IPR014719">
    <property type="entry name" value="Ribosomal_bL12_C/ClpS-like"/>
</dbReference>
<dbReference type="NCBIfam" id="NF000672">
    <property type="entry name" value="PRK00033.1-5"/>
    <property type="match status" value="1"/>
</dbReference>
<dbReference type="PANTHER" id="PTHR33473:SF19">
    <property type="entry name" value="ATP-DEPENDENT CLP PROTEASE ADAPTER PROTEIN CLPS"/>
    <property type="match status" value="1"/>
</dbReference>
<dbReference type="PANTHER" id="PTHR33473">
    <property type="entry name" value="ATP-DEPENDENT CLP PROTEASE ADAPTER PROTEIN CLPS1, CHLOROPLASTIC"/>
    <property type="match status" value="1"/>
</dbReference>
<dbReference type="Pfam" id="PF02617">
    <property type="entry name" value="ClpS"/>
    <property type="match status" value="1"/>
</dbReference>
<dbReference type="SUPFAM" id="SSF54736">
    <property type="entry name" value="ClpS-like"/>
    <property type="match status" value="1"/>
</dbReference>
<accession>A1V120</accession>